<sequence>MTENNDIKMVIITGMSGAGKTVALQSFEDLGYFCVDNLPPMLLPKFIELMADSKGKMNKVALGVDLRGREFFEHLWGALDDLSERTWIIPHILFLDAKDSTLVTRYKETRRSHPLAPTGLPLKGIEIERSLLTDMKARANIVLDTSDLKPKELREKIVHLFSTETEQAFRVNVMSFGFKYGIPIDADLVFDVRFLPNPYYIPHMKPLTGLDEEVSSYVLKFNETHKFLEKLTDLITFMLPHYKREGKSQLVIAIGCTGGQHRSVTLTEYLGKHLKPEYSVHVSHRDVEKRKGH</sequence>
<dbReference type="EMBL" id="CP001407">
    <property type="protein sequence ID" value="ACO27749.1"/>
    <property type="molecule type" value="Genomic_DNA"/>
</dbReference>
<dbReference type="SMR" id="C1EZD6"/>
<dbReference type="KEGG" id="bcx:BCA_5283"/>
<dbReference type="PATRIC" id="fig|572264.18.peg.5206"/>
<dbReference type="Proteomes" id="UP000002210">
    <property type="component" value="Chromosome"/>
</dbReference>
<dbReference type="GO" id="GO:0005524">
    <property type="term" value="F:ATP binding"/>
    <property type="evidence" value="ECO:0007669"/>
    <property type="project" value="UniProtKB-UniRule"/>
</dbReference>
<dbReference type="GO" id="GO:0005525">
    <property type="term" value="F:GTP binding"/>
    <property type="evidence" value="ECO:0007669"/>
    <property type="project" value="UniProtKB-UniRule"/>
</dbReference>
<dbReference type="Gene3D" id="3.40.50.300">
    <property type="entry name" value="P-loop containing nucleotide triphosphate hydrolases"/>
    <property type="match status" value="1"/>
</dbReference>
<dbReference type="HAMAP" id="MF_00636">
    <property type="entry name" value="RapZ_like"/>
    <property type="match status" value="1"/>
</dbReference>
<dbReference type="InterPro" id="IPR027417">
    <property type="entry name" value="P-loop_NTPase"/>
</dbReference>
<dbReference type="InterPro" id="IPR005337">
    <property type="entry name" value="RapZ-like"/>
</dbReference>
<dbReference type="InterPro" id="IPR053930">
    <property type="entry name" value="RapZ-like_N"/>
</dbReference>
<dbReference type="InterPro" id="IPR053931">
    <property type="entry name" value="RapZ_C"/>
</dbReference>
<dbReference type="NCBIfam" id="NF003828">
    <property type="entry name" value="PRK05416.1"/>
    <property type="match status" value="1"/>
</dbReference>
<dbReference type="PANTHER" id="PTHR30448">
    <property type="entry name" value="RNASE ADAPTER PROTEIN RAPZ"/>
    <property type="match status" value="1"/>
</dbReference>
<dbReference type="PANTHER" id="PTHR30448:SF0">
    <property type="entry name" value="RNASE ADAPTER PROTEIN RAPZ"/>
    <property type="match status" value="1"/>
</dbReference>
<dbReference type="Pfam" id="PF22740">
    <property type="entry name" value="PapZ_C"/>
    <property type="match status" value="1"/>
</dbReference>
<dbReference type="Pfam" id="PF03668">
    <property type="entry name" value="RapZ-like_N"/>
    <property type="match status" value="1"/>
</dbReference>
<dbReference type="PIRSF" id="PIRSF005052">
    <property type="entry name" value="P-loopkin"/>
    <property type="match status" value="1"/>
</dbReference>
<dbReference type="SUPFAM" id="SSF52540">
    <property type="entry name" value="P-loop containing nucleoside triphosphate hydrolases"/>
    <property type="match status" value="1"/>
</dbReference>
<comment type="function">
    <text evidence="1">Displays ATPase and GTPase activities.</text>
</comment>
<comment type="similarity">
    <text evidence="1">Belongs to the RapZ-like family.</text>
</comment>
<gene>
    <name type="ordered locus">BCA_5283</name>
</gene>
<name>Y5283_BACC3</name>
<reference key="1">
    <citation type="submission" date="2009-02" db="EMBL/GenBank/DDBJ databases">
        <title>Genome sequence of Bacillus cereus 03BB102.</title>
        <authorList>
            <person name="Dodson R.J."/>
            <person name="Jackson P."/>
            <person name="Munk A.C."/>
            <person name="Brettin T."/>
            <person name="Bruce D."/>
            <person name="Detter C."/>
            <person name="Tapia R."/>
            <person name="Han C."/>
            <person name="Sutton G."/>
            <person name="Sims D."/>
        </authorList>
    </citation>
    <scope>NUCLEOTIDE SEQUENCE [LARGE SCALE GENOMIC DNA]</scope>
    <source>
        <strain>03BB102</strain>
    </source>
</reference>
<feature type="chain" id="PRO_1000147352" description="Nucleotide-binding protein BCA_5283">
    <location>
        <begin position="1"/>
        <end position="293"/>
    </location>
</feature>
<feature type="binding site" evidence="1">
    <location>
        <begin position="14"/>
        <end position="21"/>
    </location>
    <ligand>
        <name>ATP</name>
        <dbReference type="ChEBI" id="CHEBI:30616"/>
    </ligand>
</feature>
<feature type="binding site" evidence="1">
    <location>
        <begin position="65"/>
        <end position="68"/>
    </location>
    <ligand>
        <name>GTP</name>
        <dbReference type="ChEBI" id="CHEBI:37565"/>
    </ligand>
</feature>
<evidence type="ECO:0000255" key="1">
    <source>
        <dbReference type="HAMAP-Rule" id="MF_00636"/>
    </source>
</evidence>
<proteinExistence type="inferred from homology"/>
<organism>
    <name type="scientific">Bacillus cereus (strain 03BB102)</name>
    <dbReference type="NCBI Taxonomy" id="572264"/>
    <lineage>
        <taxon>Bacteria</taxon>
        <taxon>Bacillati</taxon>
        <taxon>Bacillota</taxon>
        <taxon>Bacilli</taxon>
        <taxon>Bacillales</taxon>
        <taxon>Bacillaceae</taxon>
        <taxon>Bacillus</taxon>
        <taxon>Bacillus cereus group</taxon>
    </lineage>
</organism>
<protein>
    <recommendedName>
        <fullName evidence="1">Nucleotide-binding protein BCA_5283</fullName>
    </recommendedName>
</protein>
<keyword id="KW-0067">ATP-binding</keyword>
<keyword id="KW-0342">GTP-binding</keyword>
<keyword id="KW-0547">Nucleotide-binding</keyword>
<accession>C1EZD6</accession>